<sequence>MRRHSETDVEEQTQELKTITQLQEQCRALQIQGVKENMDQNKATLALLRSNIRRGAQDWALAKKYDQWTISKACGKNLPLRLAHCRSTMEVVREKLRKYVFDRVNMHNLLIHLVRRRGQKLESMQLELDSLRSQPDASKEELRLLQIIRQLENNIEKTMIKIITSQNIHLLYLDLLDYLKTVLAGYPIELDKLQNLVVNYCSELSDMKIMSQDAMMITDEVKRNMRQREASFIEERRARENRLNQQKKLIDKIHTKETSEKYRRGQMDLDFPSNLMSTETLKLRRKETSTAEMEYQSGVTAVVEKVKSAVRCSHVWDITSRFLAQRNTEENLELQMEDCEEWRVQLKALVKQLELEEAVLKFRQKPSSISFKSVEKKMTDMLKEEEERLQLAHSNMTKGQELLLTIQMGIDNLYVRLMGINLPATQREVVLSNTLDLNSKLAYCEGKLTYLADRVQMVSRTEEGDTKVRDTLESSTLMEKYNTRISFENREEDMIDTFQFPDMDHSYVPSRAEIKRQAQRLIEGKLKAAKKKKK</sequence>
<reference key="1">
    <citation type="journal article" date="2001" name="DNA Res.">
        <title>Prediction of the coding sequences of unidentified human genes. XXII. The complete sequences of 50 new cDNA clones which code for large proteins.</title>
        <authorList>
            <person name="Nagase T."/>
            <person name="Kikuno R."/>
            <person name="Ohara O."/>
        </authorList>
    </citation>
    <scope>NUCLEOTIDE SEQUENCE [LARGE SCALE MRNA] (ISOFORM 3)</scope>
    <source>
        <tissue>Brain</tissue>
    </source>
</reference>
<reference key="2">
    <citation type="journal article" date="2004" name="Nat. Genet.">
        <title>Complete sequencing and characterization of 21,243 full-length human cDNAs.</title>
        <authorList>
            <person name="Ota T."/>
            <person name="Suzuki Y."/>
            <person name="Nishikawa T."/>
            <person name="Otsuki T."/>
            <person name="Sugiyama T."/>
            <person name="Irie R."/>
            <person name="Wakamatsu A."/>
            <person name="Hayashi K."/>
            <person name="Sato H."/>
            <person name="Nagai K."/>
            <person name="Kimura K."/>
            <person name="Makita H."/>
            <person name="Sekine M."/>
            <person name="Obayashi M."/>
            <person name="Nishi T."/>
            <person name="Shibahara T."/>
            <person name="Tanaka T."/>
            <person name="Ishii S."/>
            <person name="Yamamoto J."/>
            <person name="Saito K."/>
            <person name="Kawai Y."/>
            <person name="Isono Y."/>
            <person name="Nakamura Y."/>
            <person name="Nagahari K."/>
            <person name="Murakami K."/>
            <person name="Yasuda T."/>
            <person name="Iwayanagi T."/>
            <person name="Wagatsuma M."/>
            <person name="Shiratori A."/>
            <person name="Sudo H."/>
            <person name="Hosoiri T."/>
            <person name="Kaku Y."/>
            <person name="Kodaira H."/>
            <person name="Kondo H."/>
            <person name="Sugawara M."/>
            <person name="Takahashi M."/>
            <person name="Kanda K."/>
            <person name="Yokoi T."/>
            <person name="Furuya T."/>
            <person name="Kikkawa E."/>
            <person name="Omura Y."/>
            <person name="Abe K."/>
            <person name="Kamihara K."/>
            <person name="Katsuta N."/>
            <person name="Sato K."/>
            <person name="Tanikawa M."/>
            <person name="Yamazaki M."/>
            <person name="Ninomiya K."/>
            <person name="Ishibashi T."/>
            <person name="Yamashita H."/>
            <person name="Murakawa K."/>
            <person name="Fujimori K."/>
            <person name="Tanai H."/>
            <person name="Kimata M."/>
            <person name="Watanabe M."/>
            <person name="Hiraoka S."/>
            <person name="Chiba Y."/>
            <person name="Ishida S."/>
            <person name="Ono Y."/>
            <person name="Takiguchi S."/>
            <person name="Watanabe S."/>
            <person name="Yosida M."/>
            <person name="Hotuta T."/>
            <person name="Kusano J."/>
            <person name="Kanehori K."/>
            <person name="Takahashi-Fujii A."/>
            <person name="Hara H."/>
            <person name="Tanase T.-O."/>
            <person name="Nomura Y."/>
            <person name="Togiya S."/>
            <person name="Komai F."/>
            <person name="Hara R."/>
            <person name="Takeuchi K."/>
            <person name="Arita M."/>
            <person name="Imose N."/>
            <person name="Musashino K."/>
            <person name="Yuuki H."/>
            <person name="Oshima A."/>
            <person name="Sasaki N."/>
            <person name="Aotsuka S."/>
            <person name="Yoshikawa Y."/>
            <person name="Matsunawa H."/>
            <person name="Ichihara T."/>
            <person name="Shiohata N."/>
            <person name="Sano S."/>
            <person name="Moriya S."/>
            <person name="Momiyama H."/>
            <person name="Satoh N."/>
            <person name="Takami S."/>
            <person name="Terashima Y."/>
            <person name="Suzuki O."/>
            <person name="Nakagawa S."/>
            <person name="Senoh A."/>
            <person name="Mizoguchi H."/>
            <person name="Goto Y."/>
            <person name="Shimizu F."/>
            <person name="Wakebe H."/>
            <person name="Hishigaki H."/>
            <person name="Watanabe T."/>
            <person name="Sugiyama A."/>
            <person name="Takemoto M."/>
            <person name="Kawakami B."/>
            <person name="Yamazaki M."/>
            <person name="Watanabe K."/>
            <person name="Kumagai A."/>
            <person name="Itakura S."/>
            <person name="Fukuzumi Y."/>
            <person name="Fujimori Y."/>
            <person name="Komiyama M."/>
            <person name="Tashiro H."/>
            <person name="Tanigami A."/>
            <person name="Fujiwara T."/>
            <person name="Ono T."/>
            <person name="Yamada K."/>
            <person name="Fujii Y."/>
            <person name="Ozaki K."/>
            <person name="Hirao M."/>
            <person name="Ohmori Y."/>
            <person name="Kawabata A."/>
            <person name="Hikiji T."/>
            <person name="Kobatake N."/>
            <person name="Inagaki H."/>
            <person name="Ikema Y."/>
            <person name="Okamoto S."/>
            <person name="Okitani R."/>
            <person name="Kawakami T."/>
            <person name="Noguchi S."/>
            <person name="Itoh T."/>
            <person name="Shigeta K."/>
            <person name="Senba T."/>
            <person name="Matsumura K."/>
            <person name="Nakajima Y."/>
            <person name="Mizuno T."/>
            <person name="Morinaga M."/>
            <person name="Sasaki M."/>
            <person name="Togashi T."/>
            <person name="Oyama M."/>
            <person name="Hata H."/>
            <person name="Watanabe M."/>
            <person name="Komatsu T."/>
            <person name="Mizushima-Sugano J."/>
            <person name="Satoh T."/>
            <person name="Shirai Y."/>
            <person name="Takahashi Y."/>
            <person name="Nakagawa K."/>
            <person name="Okumura K."/>
            <person name="Nagase T."/>
            <person name="Nomura N."/>
            <person name="Kikuchi H."/>
            <person name="Masuho Y."/>
            <person name="Yamashita R."/>
            <person name="Nakai K."/>
            <person name="Yada T."/>
            <person name="Nakamura Y."/>
            <person name="Ohara O."/>
            <person name="Isogai T."/>
            <person name="Sugano S."/>
        </authorList>
    </citation>
    <scope>NUCLEOTIDE SEQUENCE [LARGE SCALE MRNA] (ISOFORM 4)</scope>
    <scope>VARIANT ARG-342</scope>
    <source>
        <tissue>Prostate</tissue>
    </source>
</reference>
<reference key="3">
    <citation type="journal article" date="2004" name="Nature">
        <title>DNA sequence and analysis of human chromosome 9.</title>
        <authorList>
            <person name="Humphray S.J."/>
            <person name="Oliver K."/>
            <person name="Hunt A.R."/>
            <person name="Plumb R.W."/>
            <person name="Loveland J.E."/>
            <person name="Howe K.L."/>
            <person name="Andrews T.D."/>
            <person name="Searle S."/>
            <person name="Hunt S.E."/>
            <person name="Scott C.E."/>
            <person name="Jones M.C."/>
            <person name="Ainscough R."/>
            <person name="Almeida J.P."/>
            <person name="Ambrose K.D."/>
            <person name="Ashwell R.I.S."/>
            <person name="Babbage A.K."/>
            <person name="Babbage S."/>
            <person name="Bagguley C.L."/>
            <person name="Bailey J."/>
            <person name="Banerjee R."/>
            <person name="Barker D.J."/>
            <person name="Barlow K.F."/>
            <person name="Bates K."/>
            <person name="Beasley H."/>
            <person name="Beasley O."/>
            <person name="Bird C.P."/>
            <person name="Bray-Allen S."/>
            <person name="Brown A.J."/>
            <person name="Brown J.Y."/>
            <person name="Burford D."/>
            <person name="Burrill W."/>
            <person name="Burton J."/>
            <person name="Carder C."/>
            <person name="Carter N.P."/>
            <person name="Chapman J.C."/>
            <person name="Chen Y."/>
            <person name="Clarke G."/>
            <person name="Clark S.Y."/>
            <person name="Clee C.M."/>
            <person name="Clegg S."/>
            <person name="Collier R.E."/>
            <person name="Corby N."/>
            <person name="Crosier M."/>
            <person name="Cummings A.T."/>
            <person name="Davies J."/>
            <person name="Dhami P."/>
            <person name="Dunn M."/>
            <person name="Dutta I."/>
            <person name="Dyer L.W."/>
            <person name="Earthrowl M.E."/>
            <person name="Faulkner L."/>
            <person name="Fleming C.J."/>
            <person name="Frankish A."/>
            <person name="Frankland J.A."/>
            <person name="French L."/>
            <person name="Fricker D.G."/>
            <person name="Garner P."/>
            <person name="Garnett J."/>
            <person name="Ghori J."/>
            <person name="Gilbert J.G.R."/>
            <person name="Glison C."/>
            <person name="Grafham D.V."/>
            <person name="Gribble S."/>
            <person name="Griffiths C."/>
            <person name="Griffiths-Jones S."/>
            <person name="Grocock R."/>
            <person name="Guy J."/>
            <person name="Hall R.E."/>
            <person name="Hammond S."/>
            <person name="Harley J.L."/>
            <person name="Harrison E.S.I."/>
            <person name="Hart E.A."/>
            <person name="Heath P.D."/>
            <person name="Henderson C.D."/>
            <person name="Hopkins B.L."/>
            <person name="Howard P.J."/>
            <person name="Howden P.J."/>
            <person name="Huckle E."/>
            <person name="Johnson C."/>
            <person name="Johnson D."/>
            <person name="Joy A.A."/>
            <person name="Kay M."/>
            <person name="Keenan S."/>
            <person name="Kershaw J.K."/>
            <person name="Kimberley A.M."/>
            <person name="King A."/>
            <person name="Knights A."/>
            <person name="Laird G.K."/>
            <person name="Langford C."/>
            <person name="Lawlor S."/>
            <person name="Leongamornlert D.A."/>
            <person name="Leversha M."/>
            <person name="Lloyd C."/>
            <person name="Lloyd D.M."/>
            <person name="Lovell J."/>
            <person name="Martin S."/>
            <person name="Mashreghi-Mohammadi M."/>
            <person name="Matthews L."/>
            <person name="McLaren S."/>
            <person name="McLay K.E."/>
            <person name="McMurray A."/>
            <person name="Milne S."/>
            <person name="Nickerson T."/>
            <person name="Nisbett J."/>
            <person name="Nordsiek G."/>
            <person name="Pearce A.V."/>
            <person name="Peck A.I."/>
            <person name="Porter K.M."/>
            <person name="Pandian R."/>
            <person name="Pelan S."/>
            <person name="Phillimore B."/>
            <person name="Povey S."/>
            <person name="Ramsey Y."/>
            <person name="Rand V."/>
            <person name="Scharfe M."/>
            <person name="Sehra H.K."/>
            <person name="Shownkeen R."/>
            <person name="Sims S.K."/>
            <person name="Skuce C.D."/>
            <person name="Smith M."/>
            <person name="Steward C.A."/>
            <person name="Swarbreck D."/>
            <person name="Sycamore N."/>
            <person name="Tester J."/>
            <person name="Thorpe A."/>
            <person name="Tracey A."/>
            <person name="Tromans A."/>
            <person name="Thomas D.W."/>
            <person name="Wall M."/>
            <person name="Wallis J.M."/>
            <person name="West A.P."/>
            <person name="Whitehead S.L."/>
            <person name="Willey D.L."/>
            <person name="Williams S.A."/>
            <person name="Wilming L."/>
            <person name="Wray P.W."/>
            <person name="Young L."/>
            <person name="Ashurst J.L."/>
            <person name="Coulson A."/>
            <person name="Blocker H."/>
            <person name="Durbin R.M."/>
            <person name="Sulston J.E."/>
            <person name="Hubbard T."/>
            <person name="Jackson M.J."/>
            <person name="Bentley D.R."/>
            <person name="Beck S."/>
            <person name="Rogers J."/>
            <person name="Dunham I."/>
        </authorList>
    </citation>
    <scope>NUCLEOTIDE SEQUENCE [LARGE SCALE GENOMIC DNA]</scope>
    <scope>VARIANTS ARG-342 AND THR-421</scope>
</reference>
<reference key="4">
    <citation type="journal article" date="2004" name="Genome Res.">
        <title>The status, quality, and expansion of the NIH full-length cDNA project: the Mammalian Gene Collection (MGC).</title>
        <authorList>
            <consortium name="The MGC Project Team"/>
        </authorList>
    </citation>
    <scope>NUCLEOTIDE SEQUENCE [LARGE SCALE MRNA] (ISOFORMS 1 AND 2)</scope>
    <scope>VARIANTS ARG-342 AND THR-421</scope>
    <source>
        <tissue>Brain</tissue>
    </source>
</reference>
<gene>
    <name type="primary">CCDC183</name>
    <name type="synonym">KIAA1984</name>
</gene>
<keyword id="KW-0025">Alternative splicing</keyword>
<keyword id="KW-0175">Coiled coil</keyword>
<keyword id="KW-1267">Proteomics identification</keyword>
<keyword id="KW-1185">Reference proteome</keyword>
<accession>Q5T5S1</accession>
<accession>B2RP89</accession>
<accession>C9JD38</accession>
<accession>Q6P2D9</accession>
<accession>Q8NAI4</accession>
<accession>Q8TF18</accession>
<comment type="alternative products">
    <event type="alternative splicing"/>
    <isoform>
        <id>Q5T5S1-1</id>
        <name>1</name>
        <sequence type="displayed"/>
    </isoform>
    <isoform>
        <id>Q5T5S1-2</id>
        <name>2</name>
        <sequence type="described" ref="VSP_026482"/>
    </isoform>
    <isoform>
        <id>Q5T5S1-3</id>
        <name>3</name>
        <sequence type="described" ref="VSP_026477 VSP_026481"/>
    </isoform>
    <isoform>
        <id>Q5T5S1-4</id>
        <name>4</name>
        <sequence type="described" ref="VSP_026478 VSP_026479 VSP_026483 VSP_026484"/>
    </isoform>
</comment>
<comment type="sequence caution" evidence="8">
    <conflict type="erroneous initiation">
        <sequence resource="EMBL-CDS" id="BAB85570"/>
    </conflict>
    <text>Extended N-terminus.</text>
</comment>
<comment type="sequence caution" evidence="8">
    <molecule>Isoform 2</molecule>
    <conflict type="erroneous initiation">
        <sequence resource="EMBL-CDS" id="AAH64582"/>
    </conflict>
    <text>Truncated N-terminus.</text>
</comment>
<comment type="sequence caution" evidence="8">
    <molecule>Isoform 2</molecule>
    <conflict type="frameshift">
        <sequence resource="EMBL-CDS" id="AAH64582"/>
    </conflict>
</comment>
<dbReference type="EMBL" id="AB075864">
    <property type="protein sequence ID" value="BAB85570.1"/>
    <property type="status" value="ALT_INIT"/>
    <property type="molecule type" value="mRNA"/>
</dbReference>
<dbReference type="EMBL" id="AK092639">
    <property type="protein sequence ID" value="BAC03931.1"/>
    <property type="molecule type" value="mRNA"/>
</dbReference>
<dbReference type="EMBL" id="AL355987">
    <property type="status" value="NOT_ANNOTATED_CDS"/>
    <property type="molecule type" value="Genomic_DNA"/>
</dbReference>
<dbReference type="EMBL" id="BC064582">
    <property type="protein sequence ID" value="AAH64582.1"/>
    <property type="status" value="ALT_SEQ"/>
    <property type="molecule type" value="mRNA"/>
</dbReference>
<dbReference type="EMBL" id="BC137317">
    <property type="protein sequence ID" value="AAI37318.1"/>
    <property type="molecule type" value="mRNA"/>
</dbReference>
<dbReference type="EMBL" id="BC137318">
    <property type="protein sequence ID" value="AAI37319.1"/>
    <property type="molecule type" value="mRNA"/>
</dbReference>
<dbReference type="CCDS" id="CCDS43906.1">
    <molecule id="Q5T5S1-1"/>
</dbReference>
<dbReference type="RefSeq" id="NP_001034463.4">
    <molecule id="Q5T5S1-1"/>
    <property type="nucleotide sequence ID" value="NM_001039374.5"/>
</dbReference>
<dbReference type="SMR" id="Q5T5S1"/>
<dbReference type="BioGRID" id="124391">
    <property type="interactions" value="43"/>
</dbReference>
<dbReference type="FunCoup" id="Q5T5S1">
    <property type="interactions" value="33"/>
</dbReference>
<dbReference type="IntAct" id="Q5T5S1">
    <property type="interactions" value="32"/>
</dbReference>
<dbReference type="STRING" id="9606.ENSP00000338013"/>
<dbReference type="CarbonylDB" id="Q5T5S1"/>
<dbReference type="GlyGen" id="Q5T5S1">
    <property type="glycosylation" value="1 site, 1 O-linked glycan (1 site)"/>
</dbReference>
<dbReference type="iPTMnet" id="Q5T5S1"/>
<dbReference type="PhosphoSitePlus" id="Q5T5S1"/>
<dbReference type="BioMuta" id="CCDC183"/>
<dbReference type="DMDM" id="296439313"/>
<dbReference type="jPOST" id="Q5T5S1"/>
<dbReference type="MassIVE" id="Q5T5S1"/>
<dbReference type="PaxDb" id="9606-ENSP00000338013"/>
<dbReference type="PeptideAtlas" id="Q5T5S1"/>
<dbReference type="ProteomicsDB" id="64547">
    <molecule id="Q5T5S1-1"/>
</dbReference>
<dbReference type="ProteomicsDB" id="64548">
    <molecule id="Q5T5S1-2"/>
</dbReference>
<dbReference type="ProteomicsDB" id="64549">
    <molecule id="Q5T5S1-3"/>
</dbReference>
<dbReference type="ProteomicsDB" id="64550">
    <molecule id="Q5T5S1-4"/>
</dbReference>
<dbReference type="Antibodypedia" id="32242">
    <property type="antibodies" value="22 antibodies from 11 providers"/>
</dbReference>
<dbReference type="DNASU" id="84960"/>
<dbReference type="Ensembl" id="ENST00000338005.7">
    <molecule id="Q5T5S1-1"/>
    <property type="protein sequence ID" value="ENSP00000338013.6"/>
    <property type="gene ID" value="ENSG00000213213.14"/>
</dbReference>
<dbReference type="GeneID" id="84960"/>
<dbReference type="KEGG" id="hsa:84960"/>
<dbReference type="MANE-Select" id="ENST00000338005.7">
    <property type="protein sequence ID" value="ENSP00000338013.6"/>
    <property type="RefSeq nucleotide sequence ID" value="NM_001039374.5"/>
    <property type="RefSeq protein sequence ID" value="NP_001034463.4"/>
</dbReference>
<dbReference type="UCSC" id="uc004cjf.4">
    <molecule id="Q5T5S1-1"/>
    <property type="organism name" value="human"/>
</dbReference>
<dbReference type="AGR" id="HGNC:28236"/>
<dbReference type="CTD" id="84960"/>
<dbReference type="DisGeNET" id="84960"/>
<dbReference type="GeneCards" id="CCDC183"/>
<dbReference type="HGNC" id="HGNC:28236">
    <property type="gene designation" value="CCDC183"/>
</dbReference>
<dbReference type="HPA" id="ENSG00000213213">
    <property type="expression patterns" value="Tissue enriched (testis)"/>
</dbReference>
<dbReference type="MIM" id="615955">
    <property type="type" value="gene"/>
</dbReference>
<dbReference type="neXtProt" id="NX_Q5T5S1"/>
<dbReference type="OpenTargets" id="ENSG00000213213"/>
<dbReference type="PharmGKB" id="PA134944889"/>
<dbReference type="VEuPathDB" id="HostDB:ENSG00000213213"/>
<dbReference type="eggNOG" id="ENOG502QTFP">
    <property type="taxonomic scope" value="Eukaryota"/>
</dbReference>
<dbReference type="GeneTree" id="ENSGT00940000163544"/>
<dbReference type="HOGENOM" id="CLU_575639_0_0_1"/>
<dbReference type="InParanoid" id="Q5T5S1"/>
<dbReference type="OMA" id="RRGAHEW"/>
<dbReference type="OrthoDB" id="10255247at2759"/>
<dbReference type="PAN-GO" id="Q5T5S1">
    <property type="GO annotations" value="0 GO annotations based on evolutionary models"/>
</dbReference>
<dbReference type="PhylomeDB" id="Q5T5S1"/>
<dbReference type="TreeFam" id="TF324955"/>
<dbReference type="PathwayCommons" id="Q5T5S1"/>
<dbReference type="SignaLink" id="Q5T5S1"/>
<dbReference type="BioGRID-ORCS" id="84960">
    <property type="hits" value="28 hits in 1148 CRISPR screens"/>
</dbReference>
<dbReference type="ChiTaRS" id="CCDC183">
    <property type="organism name" value="human"/>
</dbReference>
<dbReference type="GenomeRNAi" id="84960"/>
<dbReference type="Pharos" id="Q5T5S1">
    <property type="development level" value="Tdark"/>
</dbReference>
<dbReference type="PRO" id="PR:Q5T5S1"/>
<dbReference type="Proteomes" id="UP000005640">
    <property type="component" value="Chromosome 9"/>
</dbReference>
<dbReference type="RNAct" id="Q5T5S1">
    <property type="molecule type" value="protein"/>
</dbReference>
<dbReference type="Bgee" id="ENSG00000213213">
    <property type="expression patterns" value="Expressed in left testis and 95 other cell types or tissues"/>
</dbReference>
<dbReference type="ExpressionAtlas" id="Q5T5S1">
    <property type="expression patterns" value="baseline and differential"/>
</dbReference>
<dbReference type="InterPro" id="IPR043247">
    <property type="entry name" value="CCDC183"/>
</dbReference>
<dbReference type="PANTHER" id="PTHR47115">
    <property type="entry name" value="COILED-COIL DOMAIN-CONTAINING PROTEIN 183"/>
    <property type="match status" value="1"/>
</dbReference>
<dbReference type="PANTHER" id="PTHR47115:SF1">
    <property type="entry name" value="COILED-COIL DOMAIN-CONTAINING PROTEIN 183"/>
    <property type="match status" value="1"/>
</dbReference>
<proteinExistence type="evidence at protein level"/>
<organism>
    <name type="scientific">Homo sapiens</name>
    <name type="common">Human</name>
    <dbReference type="NCBI Taxonomy" id="9606"/>
    <lineage>
        <taxon>Eukaryota</taxon>
        <taxon>Metazoa</taxon>
        <taxon>Chordata</taxon>
        <taxon>Craniata</taxon>
        <taxon>Vertebrata</taxon>
        <taxon>Euteleostomi</taxon>
        <taxon>Mammalia</taxon>
        <taxon>Eutheria</taxon>
        <taxon>Euarchontoglires</taxon>
        <taxon>Primates</taxon>
        <taxon>Haplorrhini</taxon>
        <taxon>Catarrhini</taxon>
        <taxon>Hominidae</taxon>
        <taxon>Homo</taxon>
    </lineage>
</organism>
<feature type="chain" id="PRO_0000293465" description="Coiled-coil domain-containing protein 183">
    <location>
        <begin position="1"/>
        <end position="534"/>
    </location>
</feature>
<feature type="coiled-coil region" evidence="1">
    <location>
        <begin position="10"/>
        <end position="54"/>
    </location>
</feature>
<feature type="coiled-coil region" evidence="1">
    <location>
        <begin position="136"/>
        <end position="209"/>
    </location>
</feature>
<feature type="coiled-coil region" evidence="1">
    <location>
        <begin position="323"/>
        <end position="396"/>
    </location>
</feature>
<feature type="splice variant" id="VSP_026477" description="In isoform 3." evidence="5">
    <location>
        <begin position="1"/>
        <end position="88"/>
    </location>
</feature>
<feature type="splice variant" id="VSP_026478" description="In isoform 4." evidence="6">
    <location>
        <begin position="1"/>
        <end position="42"/>
    </location>
</feature>
<feature type="splice variant" id="VSP_026479" description="In isoform 4." evidence="6">
    <original>ATLALLRSNIRRGAQDWALAKKYDQWTISKACGKNLPLRLAHCRSTME</original>
    <variation>MLRSRRGTEQVPSPRFPVGLPRASTRPPAGGLHGGPLRNHEWAVPFPTQ</variation>
    <location>
        <begin position="43"/>
        <end position="90"/>
    </location>
</feature>
<feature type="splice variant" id="VSP_026481" description="In isoform 3." evidence="5">
    <location>
        <begin position="283"/>
        <end position="534"/>
    </location>
</feature>
<feature type="splice variant" id="VSP_026483" description="In isoform 4." evidence="6">
    <original>SFKSVEKKMTDMLKEEEERLQLAHSNMTKGQELLLTIQMGIDNLYVRLMGINLPA</original>
    <variation>RCPGLPGLRATHPSLTKAPGCSQAGSWEYTHCQQACVSHRGARGLHLHTPELLSP</variation>
    <location>
        <begin position="370"/>
        <end position="424"/>
    </location>
</feature>
<feature type="splice variant" id="VSP_026484" description="In isoform 4." evidence="6">
    <location>
        <begin position="425"/>
        <end position="534"/>
    </location>
</feature>
<feature type="splice variant" id="VSP_026482" description="In isoform 2." evidence="7">
    <original>REVVLSNTLDLNSKLAYCEGKLTYLADRVQMVSRTEEGDTKVRDTLESSTLMEKYNTRISFENREEDMIDTFQFPDMDHSYVPSRAEIK</original>
    <variation>VPGVRLSCHTPGPWAGPEG</variation>
    <location>
        <begin position="427"/>
        <end position="515"/>
    </location>
</feature>
<feature type="sequence variant" id="VAR_033046" description="In dbSNP:rs945386.">
    <original>M</original>
    <variation>T</variation>
    <location>
        <position position="38"/>
    </location>
</feature>
<feature type="sequence variant" id="VAR_033047" description="In dbSNP:rs4546744.">
    <original>L</original>
    <variation>R</variation>
    <location>
        <position position="113"/>
    </location>
</feature>
<feature type="sequence variant" id="VAR_033048" description="In dbSNP:rs7859194.">
    <original>D</original>
    <variation>A</variation>
    <location>
        <position position="129"/>
    </location>
</feature>
<feature type="sequence variant" id="VAR_033049" description="In dbSNP:rs2811795." evidence="2 3 4">
    <original>W</original>
    <variation>R</variation>
    <location>
        <position position="342"/>
    </location>
</feature>
<feature type="sequence variant" id="VAR_063112" description="In dbSNP:rs2254143." evidence="3 4">
    <original>N</original>
    <variation>T</variation>
    <location>
        <position position="421"/>
    </location>
</feature>
<evidence type="ECO:0000255" key="1"/>
<evidence type="ECO:0000269" key="2">
    <source>
    </source>
</evidence>
<evidence type="ECO:0000269" key="3">
    <source>
    </source>
</evidence>
<evidence type="ECO:0000269" key="4">
    <source>
    </source>
</evidence>
<evidence type="ECO:0000303" key="5">
    <source>
    </source>
</evidence>
<evidence type="ECO:0000303" key="6">
    <source>
    </source>
</evidence>
<evidence type="ECO:0000303" key="7">
    <source>
    </source>
</evidence>
<evidence type="ECO:0000305" key="8"/>
<protein>
    <recommendedName>
        <fullName>Coiled-coil domain-containing protein 183</fullName>
    </recommendedName>
</protein>
<name>CC183_HUMAN</name>